<comment type="function">
    <text evidence="1">Constitutes the major component of lipophorin, which mediates transport for various types of lipids in hemolymph. Acts by forming lipoprotein particles that bind lipoproteins and lipids (By similarity).</text>
</comment>
<comment type="subcellular location">
    <subcellularLocation>
        <location evidence="3">Secreted</location>
    </subcellularLocation>
    <text evidence="3">Secreted into hemolymph.</text>
</comment>
<comment type="tissue specificity">
    <text evidence="3">Expressed in hemolymph.</text>
</comment>
<name>APLP1_GALME</name>
<protein>
    <recommendedName>
        <fullName evidence="4">Apolipophorin-1</fullName>
    </recommendedName>
    <alternativeName>
        <fullName evidence="4">Apolipophorin-I</fullName>
        <shortName evidence="4">apoLp-I</shortName>
    </alternativeName>
</protein>
<feature type="chain" id="PRO_0000443524" description="Apolipophorin-1" evidence="3">
    <location>
        <begin position="1"/>
        <end position="23" status="greater than"/>
    </location>
</feature>
<feature type="region of interest" description="Disordered" evidence="2">
    <location>
        <begin position="1"/>
        <end position="23"/>
    </location>
</feature>
<feature type="compositionally biased region" description="Basic and acidic residues" evidence="2">
    <location>
        <begin position="1"/>
        <end position="15"/>
    </location>
</feature>
<feature type="non-terminal residue" evidence="4">
    <location>
        <position position="23"/>
    </location>
</feature>
<proteinExistence type="evidence at protein level"/>
<reference evidence="5" key="1">
    <citation type="journal article" date="2017" name="J. Insect Physiol.">
        <title>Studies on localization and protein ligands of Galleria mellonella apolipophorin III during immune response against different pathogens.</title>
        <authorList>
            <person name="Staczek S."/>
            <person name="Zdybicka-Barabas A."/>
            <person name="Mak P."/>
            <person name="Sowa-Jasilek A."/>
            <person name="Kedracka-Krok S."/>
            <person name="Jankowska U."/>
            <person name="Suder P."/>
            <person name="Wydrych J."/>
            <person name="Grygorczuk K."/>
            <person name="Jakubowicz T."/>
            <person name="Cytrynska M."/>
        </authorList>
    </citation>
    <scope>PROTEIN SEQUENCE</scope>
    <scope>SUBCELLULAR LOCATION</scope>
    <scope>TISSUE SPECIFICITY</scope>
    <source>
        <tissue evidence="4">Hemolymph</tissue>
    </source>
</reference>
<keyword id="KW-0903">Direct protein sequencing</keyword>
<keyword id="KW-0445">Lipid transport</keyword>
<keyword id="KW-0446">Lipid-binding</keyword>
<keyword id="KW-1185">Reference proteome</keyword>
<keyword id="KW-0964">Secreted</keyword>
<keyword id="KW-0813">Transport</keyword>
<accession>C0HKF3</accession>
<organism evidence="4">
    <name type="scientific">Galleria mellonella</name>
    <name type="common">Greater wax moth</name>
    <dbReference type="NCBI Taxonomy" id="7137"/>
    <lineage>
        <taxon>Eukaryota</taxon>
        <taxon>Metazoa</taxon>
        <taxon>Ecdysozoa</taxon>
        <taxon>Arthropoda</taxon>
        <taxon>Hexapoda</taxon>
        <taxon>Insecta</taxon>
        <taxon>Pterygota</taxon>
        <taxon>Neoptera</taxon>
        <taxon>Endopterygota</taxon>
        <taxon>Lepidoptera</taxon>
        <taxon>Glossata</taxon>
        <taxon>Ditrysia</taxon>
        <taxon>Pyraloidea</taxon>
        <taxon>Pyralidae</taxon>
        <taxon>Galleriinae</taxon>
        <taxon>Galleria</taxon>
    </lineage>
</organism>
<sequence length="23" mass="2606">SVKSEVDNFDKHLKAESAPFNNE</sequence>
<dbReference type="InParanoid" id="C0HKF3"/>
<dbReference type="Proteomes" id="UP000504614">
    <property type="component" value="Unplaced"/>
</dbReference>
<dbReference type="GO" id="GO:0005615">
    <property type="term" value="C:extracellular space"/>
    <property type="evidence" value="ECO:0000314"/>
    <property type="project" value="UniProtKB"/>
</dbReference>
<dbReference type="GO" id="GO:0008289">
    <property type="term" value="F:lipid binding"/>
    <property type="evidence" value="ECO:0007669"/>
    <property type="project" value="UniProtKB-KW"/>
</dbReference>
<dbReference type="GO" id="GO:0006869">
    <property type="term" value="P:lipid transport"/>
    <property type="evidence" value="ECO:0007669"/>
    <property type="project" value="UniProtKB-KW"/>
</dbReference>
<evidence type="ECO:0000250" key="1">
    <source>
        <dbReference type="UniProtKB" id="Q9V496"/>
    </source>
</evidence>
<evidence type="ECO:0000256" key="2">
    <source>
        <dbReference type="SAM" id="MobiDB-lite"/>
    </source>
</evidence>
<evidence type="ECO:0000269" key="3">
    <source>
    </source>
</evidence>
<evidence type="ECO:0000303" key="4">
    <source>
    </source>
</evidence>
<evidence type="ECO:0000305" key="5"/>